<comment type="function">
    <text evidence="1">Allows the formation of correctly charged Asn-tRNA(Asn) or Gln-tRNA(Gln) through the transamidation of misacylated Asp-tRNA(Asn) or Glu-tRNA(Gln) in organisms which lack either or both of asparaginyl-tRNA or glutaminyl-tRNA synthetases. The reaction takes place in the presence of glutamine and ATP through an activated phospho-Asp-tRNA(Asn) or phospho-Glu-tRNA(Gln).</text>
</comment>
<comment type="catalytic activity">
    <reaction evidence="1">
        <text>L-glutamyl-tRNA(Gln) + L-glutamine + ATP + H2O = L-glutaminyl-tRNA(Gln) + L-glutamate + ADP + phosphate + H(+)</text>
        <dbReference type="Rhea" id="RHEA:17521"/>
        <dbReference type="Rhea" id="RHEA-COMP:9681"/>
        <dbReference type="Rhea" id="RHEA-COMP:9684"/>
        <dbReference type="ChEBI" id="CHEBI:15377"/>
        <dbReference type="ChEBI" id="CHEBI:15378"/>
        <dbReference type="ChEBI" id="CHEBI:29985"/>
        <dbReference type="ChEBI" id="CHEBI:30616"/>
        <dbReference type="ChEBI" id="CHEBI:43474"/>
        <dbReference type="ChEBI" id="CHEBI:58359"/>
        <dbReference type="ChEBI" id="CHEBI:78520"/>
        <dbReference type="ChEBI" id="CHEBI:78521"/>
        <dbReference type="ChEBI" id="CHEBI:456216"/>
    </reaction>
</comment>
<comment type="catalytic activity">
    <reaction evidence="1">
        <text>L-aspartyl-tRNA(Asn) + L-glutamine + ATP + H2O = L-asparaginyl-tRNA(Asn) + L-glutamate + ADP + phosphate + 2 H(+)</text>
        <dbReference type="Rhea" id="RHEA:14513"/>
        <dbReference type="Rhea" id="RHEA-COMP:9674"/>
        <dbReference type="Rhea" id="RHEA-COMP:9677"/>
        <dbReference type="ChEBI" id="CHEBI:15377"/>
        <dbReference type="ChEBI" id="CHEBI:15378"/>
        <dbReference type="ChEBI" id="CHEBI:29985"/>
        <dbReference type="ChEBI" id="CHEBI:30616"/>
        <dbReference type="ChEBI" id="CHEBI:43474"/>
        <dbReference type="ChEBI" id="CHEBI:58359"/>
        <dbReference type="ChEBI" id="CHEBI:78515"/>
        <dbReference type="ChEBI" id="CHEBI:78516"/>
        <dbReference type="ChEBI" id="CHEBI:456216"/>
    </reaction>
</comment>
<comment type="subunit">
    <text evidence="1">Heterotrimer of A, B and C subunits.</text>
</comment>
<comment type="similarity">
    <text evidence="1">Belongs to the GatC family.</text>
</comment>
<gene>
    <name evidence="1" type="primary">gatC</name>
    <name type="ordered locus">lwe1773</name>
</gene>
<dbReference type="EC" id="6.3.5.-" evidence="1"/>
<dbReference type="EMBL" id="AM263198">
    <property type="protein sequence ID" value="CAK21191.1"/>
    <property type="molecule type" value="Genomic_DNA"/>
</dbReference>
<dbReference type="RefSeq" id="WP_011702551.1">
    <property type="nucleotide sequence ID" value="NC_008555.1"/>
</dbReference>
<dbReference type="SMR" id="A0AJK9"/>
<dbReference type="STRING" id="386043.lwe1773"/>
<dbReference type="GeneID" id="61189672"/>
<dbReference type="KEGG" id="lwe:lwe1773"/>
<dbReference type="eggNOG" id="COG0721">
    <property type="taxonomic scope" value="Bacteria"/>
</dbReference>
<dbReference type="HOGENOM" id="CLU_105899_6_1_9"/>
<dbReference type="OrthoDB" id="9813938at2"/>
<dbReference type="Proteomes" id="UP000000779">
    <property type="component" value="Chromosome"/>
</dbReference>
<dbReference type="GO" id="GO:0050566">
    <property type="term" value="F:asparaginyl-tRNA synthase (glutamine-hydrolyzing) activity"/>
    <property type="evidence" value="ECO:0007669"/>
    <property type="project" value="RHEA"/>
</dbReference>
<dbReference type="GO" id="GO:0005524">
    <property type="term" value="F:ATP binding"/>
    <property type="evidence" value="ECO:0007669"/>
    <property type="project" value="UniProtKB-KW"/>
</dbReference>
<dbReference type="GO" id="GO:0050567">
    <property type="term" value="F:glutaminyl-tRNA synthase (glutamine-hydrolyzing) activity"/>
    <property type="evidence" value="ECO:0007669"/>
    <property type="project" value="UniProtKB-UniRule"/>
</dbReference>
<dbReference type="GO" id="GO:0070681">
    <property type="term" value="P:glutaminyl-tRNAGln biosynthesis via transamidation"/>
    <property type="evidence" value="ECO:0007669"/>
    <property type="project" value="TreeGrafter"/>
</dbReference>
<dbReference type="GO" id="GO:0006450">
    <property type="term" value="P:regulation of translational fidelity"/>
    <property type="evidence" value="ECO:0007669"/>
    <property type="project" value="InterPro"/>
</dbReference>
<dbReference type="GO" id="GO:0006412">
    <property type="term" value="P:translation"/>
    <property type="evidence" value="ECO:0007669"/>
    <property type="project" value="UniProtKB-UniRule"/>
</dbReference>
<dbReference type="Gene3D" id="1.10.20.60">
    <property type="entry name" value="Glu-tRNAGln amidotransferase C subunit, N-terminal domain"/>
    <property type="match status" value="1"/>
</dbReference>
<dbReference type="HAMAP" id="MF_00122">
    <property type="entry name" value="GatC"/>
    <property type="match status" value="1"/>
</dbReference>
<dbReference type="InterPro" id="IPR036113">
    <property type="entry name" value="Asp/Glu-ADT_sf_sub_c"/>
</dbReference>
<dbReference type="InterPro" id="IPR003837">
    <property type="entry name" value="GatC"/>
</dbReference>
<dbReference type="NCBIfam" id="TIGR00135">
    <property type="entry name" value="gatC"/>
    <property type="match status" value="1"/>
</dbReference>
<dbReference type="PANTHER" id="PTHR15004">
    <property type="entry name" value="GLUTAMYL-TRNA(GLN) AMIDOTRANSFERASE SUBUNIT C, MITOCHONDRIAL"/>
    <property type="match status" value="1"/>
</dbReference>
<dbReference type="PANTHER" id="PTHR15004:SF0">
    <property type="entry name" value="GLUTAMYL-TRNA(GLN) AMIDOTRANSFERASE SUBUNIT C, MITOCHONDRIAL"/>
    <property type="match status" value="1"/>
</dbReference>
<dbReference type="Pfam" id="PF02686">
    <property type="entry name" value="GatC"/>
    <property type="match status" value="1"/>
</dbReference>
<dbReference type="SUPFAM" id="SSF141000">
    <property type="entry name" value="Glu-tRNAGln amidotransferase C subunit"/>
    <property type="match status" value="1"/>
</dbReference>
<evidence type="ECO:0000255" key="1">
    <source>
        <dbReference type="HAMAP-Rule" id="MF_00122"/>
    </source>
</evidence>
<organism>
    <name type="scientific">Listeria welshimeri serovar 6b (strain ATCC 35897 / DSM 20650 / CCUG 15529 / CIP 8149 / NCTC 11857 / SLCC 5334 / V8)</name>
    <dbReference type="NCBI Taxonomy" id="386043"/>
    <lineage>
        <taxon>Bacteria</taxon>
        <taxon>Bacillati</taxon>
        <taxon>Bacillota</taxon>
        <taxon>Bacilli</taxon>
        <taxon>Bacillales</taxon>
        <taxon>Listeriaceae</taxon>
        <taxon>Listeria</taxon>
    </lineage>
</organism>
<reference key="1">
    <citation type="journal article" date="2006" name="J. Bacteriol.">
        <title>Whole-genome sequence of Listeria welshimeri reveals common steps in genome reduction with Listeria innocua as compared to Listeria monocytogenes.</title>
        <authorList>
            <person name="Hain T."/>
            <person name="Steinweg C."/>
            <person name="Kuenne C.T."/>
            <person name="Billion A."/>
            <person name="Ghai R."/>
            <person name="Chatterjee S.S."/>
            <person name="Domann E."/>
            <person name="Kaerst U."/>
            <person name="Goesmann A."/>
            <person name="Bekel T."/>
            <person name="Bartels D."/>
            <person name="Kaiser O."/>
            <person name="Meyer F."/>
            <person name="Puehler A."/>
            <person name="Weisshaar B."/>
            <person name="Wehland J."/>
            <person name="Liang C."/>
            <person name="Dandekar T."/>
            <person name="Lampidis R."/>
            <person name="Kreft J."/>
            <person name="Goebel W."/>
            <person name="Chakraborty T."/>
        </authorList>
    </citation>
    <scope>NUCLEOTIDE SEQUENCE [LARGE SCALE GENOMIC DNA]</scope>
    <source>
        <strain>ATCC 35897 / DSM 20650 / CCUG 15529 / CIP 8149 / NCTC 11857 / SLCC 5334 / V8</strain>
    </source>
</reference>
<keyword id="KW-0067">ATP-binding</keyword>
<keyword id="KW-0436">Ligase</keyword>
<keyword id="KW-0547">Nucleotide-binding</keyword>
<keyword id="KW-0648">Protein biosynthesis</keyword>
<name>GATC_LISW6</name>
<sequence>MSNISKETVEKVANLAKLEVSEKEATAFAGQLGKIIELVEQLNTLDTNNVEPTSHAIDVSNVLREDVATKGLDRKEVLKNAPDEQDGMFKVPTIMEQ</sequence>
<feature type="chain" id="PRO_1000016140" description="Aspartyl/glutamyl-tRNA(Asn/Gln) amidotransferase subunit C">
    <location>
        <begin position="1"/>
        <end position="97"/>
    </location>
</feature>
<accession>A0AJK9</accession>
<protein>
    <recommendedName>
        <fullName evidence="1">Aspartyl/glutamyl-tRNA(Asn/Gln) amidotransferase subunit C</fullName>
        <shortName evidence="1">Asp/Glu-ADT subunit C</shortName>
        <ecNumber evidence="1">6.3.5.-</ecNumber>
    </recommendedName>
</protein>
<proteinExistence type="inferred from homology"/>